<organism>
    <name type="scientific">Escherichia coli O8 (strain IAI1)</name>
    <dbReference type="NCBI Taxonomy" id="585034"/>
    <lineage>
        <taxon>Bacteria</taxon>
        <taxon>Pseudomonadati</taxon>
        <taxon>Pseudomonadota</taxon>
        <taxon>Gammaproteobacteria</taxon>
        <taxon>Enterobacterales</taxon>
        <taxon>Enterobacteriaceae</taxon>
        <taxon>Escherichia</taxon>
    </lineage>
</organism>
<keyword id="KW-0687">Ribonucleoprotein</keyword>
<keyword id="KW-0689">Ribosomal protein</keyword>
<comment type="similarity">
    <text evidence="1">Belongs to the universal ribosomal protein uS2 family.</text>
</comment>
<reference key="1">
    <citation type="journal article" date="2009" name="PLoS Genet.">
        <title>Organised genome dynamics in the Escherichia coli species results in highly diverse adaptive paths.</title>
        <authorList>
            <person name="Touchon M."/>
            <person name="Hoede C."/>
            <person name="Tenaillon O."/>
            <person name="Barbe V."/>
            <person name="Baeriswyl S."/>
            <person name="Bidet P."/>
            <person name="Bingen E."/>
            <person name="Bonacorsi S."/>
            <person name="Bouchier C."/>
            <person name="Bouvet O."/>
            <person name="Calteau A."/>
            <person name="Chiapello H."/>
            <person name="Clermont O."/>
            <person name="Cruveiller S."/>
            <person name="Danchin A."/>
            <person name="Diard M."/>
            <person name="Dossat C."/>
            <person name="Karoui M.E."/>
            <person name="Frapy E."/>
            <person name="Garry L."/>
            <person name="Ghigo J.M."/>
            <person name="Gilles A.M."/>
            <person name="Johnson J."/>
            <person name="Le Bouguenec C."/>
            <person name="Lescat M."/>
            <person name="Mangenot S."/>
            <person name="Martinez-Jehanne V."/>
            <person name="Matic I."/>
            <person name="Nassif X."/>
            <person name="Oztas S."/>
            <person name="Petit M.A."/>
            <person name="Pichon C."/>
            <person name="Rouy Z."/>
            <person name="Ruf C.S."/>
            <person name="Schneider D."/>
            <person name="Tourret J."/>
            <person name="Vacherie B."/>
            <person name="Vallenet D."/>
            <person name="Medigue C."/>
            <person name="Rocha E.P.C."/>
            <person name="Denamur E."/>
        </authorList>
    </citation>
    <scope>NUCLEOTIDE SEQUENCE [LARGE SCALE GENOMIC DNA]</scope>
    <source>
        <strain>IAI1</strain>
    </source>
</reference>
<gene>
    <name evidence="1" type="primary">rpsB</name>
    <name type="ordered locus">ECIAI1_0167</name>
</gene>
<sequence>MATVSMRDMLKAGVHFGHQTRYWNPKMKPFIFGARNKVHIINLEKTVPMFNEALAELNKIASRKGKILFVGTKRAASEAVKDAALSCDQFFVNHRWLGGMLTNWKTVRQSIKRLKDLETQSQDGTFEKLTKKEALMRTRELEKLENSLGGIKDMGGLPDALFVIDADHEHIAIKEANNLGIPVFAIVDTNSDPDGVDFVIPGNDDAIRAVTLYLGAVAATVREGRSQDLASQAEESFVEAE</sequence>
<protein>
    <recommendedName>
        <fullName evidence="1">Small ribosomal subunit protein uS2</fullName>
    </recommendedName>
    <alternativeName>
        <fullName evidence="2">30S ribosomal protein S2</fullName>
    </alternativeName>
</protein>
<dbReference type="EMBL" id="CU928160">
    <property type="protein sequence ID" value="CAQ97055.1"/>
    <property type="molecule type" value="Genomic_DNA"/>
</dbReference>
<dbReference type="RefSeq" id="WP_000246884.1">
    <property type="nucleotide sequence ID" value="NC_011741.1"/>
</dbReference>
<dbReference type="SMR" id="B7M1A9"/>
<dbReference type="GeneID" id="93777256"/>
<dbReference type="KEGG" id="ecr:ECIAI1_0167"/>
<dbReference type="HOGENOM" id="CLU_040318_1_2_6"/>
<dbReference type="GO" id="GO:0022627">
    <property type="term" value="C:cytosolic small ribosomal subunit"/>
    <property type="evidence" value="ECO:0007669"/>
    <property type="project" value="TreeGrafter"/>
</dbReference>
<dbReference type="GO" id="GO:0003735">
    <property type="term" value="F:structural constituent of ribosome"/>
    <property type="evidence" value="ECO:0007669"/>
    <property type="project" value="InterPro"/>
</dbReference>
<dbReference type="GO" id="GO:0006412">
    <property type="term" value="P:translation"/>
    <property type="evidence" value="ECO:0007669"/>
    <property type="project" value="UniProtKB-UniRule"/>
</dbReference>
<dbReference type="CDD" id="cd01425">
    <property type="entry name" value="RPS2"/>
    <property type="match status" value="1"/>
</dbReference>
<dbReference type="FunFam" id="1.10.287.610:FF:000001">
    <property type="entry name" value="30S ribosomal protein S2"/>
    <property type="match status" value="1"/>
</dbReference>
<dbReference type="Gene3D" id="3.40.50.10490">
    <property type="entry name" value="Glucose-6-phosphate isomerase like protein, domain 1"/>
    <property type="match status" value="1"/>
</dbReference>
<dbReference type="Gene3D" id="1.10.287.610">
    <property type="entry name" value="Helix hairpin bin"/>
    <property type="match status" value="1"/>
</dbReference>
<dbReference type="HAMAP" id="MF_00291_B">
    <property type="entry name" value="Ribosomal_uS2_B"/>
    <property type="match status" value="1"/>
</dbReference>
<dbReference type="InterPro" id="IPR001865">
    <property type="entry name" value="Ribosomal_uS2"/>
</dbReference>
<dbReference type="InterPro" id="IPR005706">
    <property type="entry name" value="Ribosomal_uS2_bac/mit/plastid"/>
</dbReference>
<dbReference type="InterPro" id="IPR018130">
    <property type="entry name" value="Ribosomal_uS2_CS"/>
</dbReference>
<dbReference type="InterPro" id="IPR023591">
    <property type="entry name" value="Ribosomal_uS2_flav_dom_sf"/>
</dbReference>
<dbReference type="NCBIfam" id="TIGR01011">
    <property type="entry name" value="rpsB_bact"/>
    <property type="match status" value="1"/>
</dbReference>
<dbReference type="PANTHER" id="PTHR12534">
    <property type="entry name" value="30S RIBOSOMAL PROTEIN S2 PROKARYOTIC AND ORGANELLAR"/>
    <property type="match status" value="1"/>
</dbReference>
<dbReference type="PANTHER" id="PTHR12534:SF0">
    <property type="entry name" value="SMALL RIBOSOMAL SUBUNIT PROTEIN US2M"/>
    <property type="match status" value="1"/>
</dbReference>
<dbReference type="Pfam" id="PF00318">
    <property type="entry name" value="Ribosomal_S2"/>
    <property type="match status" value="1"/>
</dbReference>
<dbReference type="PRINTS" id="PR00395">
    <property type="entry name" value="RIBOSOMALS2"/>
</dbReference>
<dbReference type="SUPFAM" id="SSF52313">
    <property type="entry name" value="Ribosomal protein S2"/>
    <property type="match status" value="1"/>
</dbReference>
<dbReference type="PROSITE" id="PS00962">
    <property type="entry name" value="RIBOSOMAL_S2_1"/>
    <property type="match status" value="1"/>
</dbReference>
<dbReference type="PROSITE" id="PS00963">
    <property type="entry name" value="RIBOSOMAL_S2_2"/>
    <property type="match status" value="1"/>
</dbReference>
<proteinExistence type="inferred from homology"/>
<accession>B7M1A9</accession>
<feature type="chain" id="PRO_1000119426" description="Small ribosomal subunit protein uS2">
    <location>
        <begin position="1"/>
        <end position="241"/>
    </location>
</feature>
<name>RS2_ECO8A</name>
<evidence type="ECO:0000255" key="1">
    <source>
        <dbReference type="HAMAP-Rule" id="MF_00291"/>
    </source>
</evidence>
<evidence type="ECO:0000305" key="2"/>